<accession>C1FYJ9</accession>
<reference key="1">
    <citation type="journal article" date="2011" name="PLoS Genet.">
        <title>Comparative genomic analysis of human fungal pathogens causing paracoccidioidomycosis.</title>
        <authorList>
            <person name="Desjardins C.A."/>
            <person name="Champion M.D."/>
            <person name="Holder J.W."/>
            <person name="Muszewska A."/>
            <person name="Goldberg J."/>
            <person name="Bailao A.M."/>
            <person name="Brigido M.M."/>
            <person name="Ferreira M.E."/>
            <person name="Garcia A.M."/>
            <person name="Grynberg M."/>
            <person name="Gujja S."/>
            <person name="Heiman D.I."/>
            <person name="Henn M.R."/>
            <person name="Kodira C.D."/>
            <person name="Leon-Narvaez H."/>
            <person name="Longo L.V.G."/>
            <person name="Ma L.-J."/>
            <person name="Malavazi I."/>
            <person name="Matsuo A.L."/>
            <person name="Morais F.V."/>
            <person name="Pereira M."/>
            <person name="Rodriguez-Brito S."/>
            <person name="Sakthikumar S."/>
            <person name="Salem-Izacc S.M."/>
            <person name="Sykes S.M."/>
            <person name="Teixeira M.M."/>
            <person name="Vallejo M.C."/>
            <person name="Walter M.E."/>
            <person name="Yandava C."/>
            <person name="Young S."/>
            <person name="Zeng Q."/>
            <person name="Zucker J."/>
            <person name="Felipe M.S."/>
            <person name="Goldman G.H."/>
            <person name="Haas B.J."/>
            <person name="McEwen J.G."/>
            <person name="Nino-Vega G."/>
            <person name="Puccia R."/>
            <person name="San-Blas G."/>
            <person name="Soares C.M."/>
            <person name="Birren B.W."/>
            <person name="Cuomo C.A."/>
        </authorList>
    </citation>
    <scope>NUCLEOTIDE SEQUENCE [LARGE SCALE GENOMIC DNA]</scope>
    <source>
        <strain>Pb18</strain>
    </source>
</reference>
<keyword id="KW-0028">Amino-acid biosynthesis</keyword>
<keyword id="KW-0057">Aromatic amino acid biosynthesis</keyword>
<keyword id="KW-0067">ATP-binding</keyword>
<keyword id="KW-0963">Cytoplasm</keyword>
<keyword id="KW-0418">Kinase</keyword>
<keyword id="KW-0456">Lyase</keyword>
<keyword id="KW-0479">Metal-binding</keyword>
<keyword id="KW-0511">Multifunctional enzyme</keyword>
<keyword id="KW-0521">NADP</keyword>
<keyword id="KW-0547">Nucleotide-binding</keyword>
<keyword id="KW-0560">Oxidoreductase</keyword>
<keyword id="KW-1185">Reference proteome</keyword>
<keyword id="KW-0808">Transferase</keyword>
<keyword id="KW-0862">Zinc</keyword>
<name>ARO1_PARBD</name>
<proteinExistence type="inferred from homology"/>
<sequence length="1598" mass="173938">MGVPTKISILGRESIVADFGIWRNYVAKDLLSNCASSTYILISDTNLTPLYLAGFQQSFENAAAGLSPKPRLLTYEIPPGESSKSRETKAEIEDWMLARQPPCGRDTVIIALGGGVIGDLIGFVAATYMRGVRFVQVPTTLLAMVDSSIGGKTAIDTPNGKNLIGAIWQPQRIYLDMEFLNTLPEREFINGMAEVIKTAAISSEEKFAALENDADVILAAVKSKNTPDRLRFSSIQETLKRTILSSAEFKAQVVSADEREGGLRNLLNFGHSIGHAIEAILAPQVLHGECVSIGMVKEAELARHLGILNNVSVARIAKCLASYELPTSLKDERIKRLTAGKHCSVEQIITYMGVDKKNDGPKKKVVLLSAIGRTYEPRASTVSNEDLQVVLAPSIEVYPGFPKSLNVTCTPPGSKSISNRALVLAALGSGTCRIKNLLHSDDTEVMLTALERLGAATFSWESQGEVLVVNGNGGRMVASPKELYLGNAGTASRFLTTVATLAQKGSVASSVLTGNARMKQRPIGDLVDALKANGADIEYLENPKSLPLKITASGGFAGGEMRLDAKVSSQYVSSLLMCAPYAKEPVTLRLVGGKPVSQLYVDMTTAMMRSFGIDVKKSETEEHTYHIPRGVYKNPAEYVVESDASSATYPLAIAAMTGTSCTIPNIGSKSLQGDARFAIEVLRPMGCTVNQTDFSTSVTGTAGGKLKSLPTIDMEPMTDAFLTASVLAAVARGQGSNHTTRICGIANQRVKECNRIKAMKDELAKFGVTCREHDDGLEIDGIDRSTLRHPTEGVFCYDDHRVAMSFSVLALVAPQPTLILEKECVGKTWPGWWNTLAQTFKVKLDGKEVEVEERAETNGVAHLDKSAASIFIIGMRGAGKTTSGVWVSKALQRPFIDLDDELEKSEGMTIPEMIKQRGWEGFRDSELALLRRVMTEKPMGYIFACGGGVVELPEARELLTQYHKTKGNVILAMRDIKEVMDFLKIDKTRPAYVEDMMSVWLRRKPWYQECSNIQYYSRITQPDGMAQVLHGFNRFLKVITGQLDSLAQMRRKENTFFVSLTFPDLTPASNILKEVTLGSDAVELRVDLLKDPQSDSEIPSVDYVAEQISVLRSRVSVPLVFTIRTKSQGGRFPDDAYDAALQLYRLAIRMGSEFVDLELSFPEQLLRTVTEMKGFSKIIASHHDPEGLLSWANGSWIQIYNKALQYGDVIKLVGVAKTLDDNASLKKFKTWAEAKHDVPLIAINMGYKGQLSRILNGFMTPVSHPSLPFKAAPGQLSAREIRKGLSLMGEIKAKKFAVIGKPVSSSRSPAMHNALFKQMGLPHTYGRIETDNVEDVKEFILSPDFGGASVTIPLKLDIMPLLDEIAPEAEMIGAVNTIVSVPAAPGDKSQSSRLIGRNTDWQGMVRCLSDAGAYSAATPTTSSAGLIIGGGGTARAAIFALNSMSYSPIYIVGRSPEKLACMASSFPADYNIRIVDDVKALESLPMVAIGTIPGDKPIELHMREVLCEILSLCEKANVEAERKTGITPKRILLEMAYKPSVTSLMKLASDAGWTVLPGLEVLVAQGVYQSEYWTDITPVYENARKAVMGVSSSDDTIS</sequence>
<feature type="chain" id="PRO_0000406729" description="Pentafunctional AROM polypeptide">
    <location>
        <begin position="1"/>
        <end position="1598"/>
    </location>
</feature>
<feature type="region of interest" description="3-dehydroquinate synthase">
    <location>
        <begin position="1"/>
        <end position="384"/>
    </location>
</feature>
<feature type="region of interest" description="EPSP synthase">
    <location>
        <begin position="397"/>
        <end position="842"/>
    </location>
</feature>
<feature type="region of interest" description="Shikimate kinase">
    <location>
        <begin position="867"/>
        <end position="1059"/>
    </location>
</feature>
<feature type="region of interest" description="3-dehydroquinase">
    <location>
        <begin position="1060"/>
        <end position="1280"/>
    </location>
</feature>
<feature type="region of interest" description="Shikimate dehydrogenase">
    <location>
        <begin position="1293"/>
        <end position="1598"/>
    </location>
</feature>
<feature type="active site" description="Proton acceptor; for 3-dehydroquinate synthase activity" evidence="1">
    <location>
        <position position="260"/>
    </location>
</feature>
<feature type="active site" description="Proton acceptor; for 3-dehydroquinate synthase activity" evidence="1">
    <location>
        <position position="275"/>
    </location>
</feature>
<feature type="active site" description="For EPSP synthase activity" evidence="1">
    <location>
        <position position="824"/>
    </location>
</feature>
<feature type="active site" description="Proton acceptor; for 3-dehydroquinate dehydratase activity" evidence="1">
    <location>
        <position position="1183"/>
    </location>
</feature>
<feature type="active site" description="Schiff-base intermediate with substrate; for 3-dehydroquinate dehydratase activity" evidence="1">
    <location>
        <position position="1211"/>
    </location>
</feature>
<feature type="binding site" evidence="1">
    <location>
        <begin position="44"/>
        <end position="46"/>
    </location>
    <ligand>
        <name>NAD(+)</name>
        <dbReference type="ChEBI" id="CHEBI:57540"/>
    </ligand>
</feature>
<feature type="binding site" evidence="1">
    <location>
        <begin position="81"/>
        <end position="84"/>
    </location>
    <ligand>
        <name>NAD(+)</name>
        <dbReference type="ChEBI" id="CHEBI:57540"/>
    </ligand>
</feature>
<feature type="binding site" evidence="1">
    <location>
        <begin position="114"/>
        <end position="116"/>
    </location>
    <ligand>
        <name>NAD(+)</name>
        <dbReference type="ChEBI" id="CHEBI:57540"/>
    </ligand>
</feature>
<feature type="binding site" evidence="1">
    <location>
        <position position="119"/>
    </location>
    <ligand>
        <name>NAD(+)</name>
        <dbReference type="ChEBI" id="CHEBI:57540"/>
    </ligand>
</feature>
<feature type="binding site" evidence="1">
    <location>
        <position position="130"/>
    </location>
    <ligand>
        <name>7-phospho-2-dehydro-3-deoxy-D-arabino-heptonate</name>
        <dbReference type="ChEBI" id="CHEBI:58394"/>
    </ligand>
</feature>
<feature type="binding site" evidence="1">
    <location>
        <begin position="139"/>
        <end position="140"/>
    </location>
    <ligand>
        <name>NAD(+)</name>
        <dbReference type="ChEBI" id="CHEBI:57540"/>
    </ligand>
</feature>
<feature type="binding site" evidence="1">
    <location>
        <position position="146"/>
    </location>
    <ligand>
        <name>7-phospho-2-dehydro-3-deoxy-D-arabino-heptonate</name>
        <dbReference type="ChEBI" id="CHEBI:58394"/>
    </ligand>
</feature>
<feature type="binding site" evidence="1">
    <location>
        <position position="152"/>
    </location>
    <ligand>
        <name>7-phospho-2-dehydro-3-deoxy-D-arabino-heptonate</name>
        <dbReference type="ChEBI" id="CHEBI:58394"/>
    </ligand>
</feature>
<feature type="binding site" evidence="1">
    <location>
        <position position="161"/>
    </location>
    <ligand>
        <name>NAD(+)</name>
        <dbReference type="ChEBI" id="CHEBI:57540"/>
    </ligand>
</feature>
<feature type="binding site" evidence="1">
    <location>
        <position position="162"/>
    </location>
    <ligand>
        <name>7-phospho-2-dehydro-3-deoxy-D-arabino-heptonate</name>
        <dbReference type="ChEBI" id="CHEBI:58394"/>
    </ligand>
</feature>
<feature type="binding site" evidence="1">
    <location>
        <begin position="179"/>
        <end position="182"/>
    </location>
    <ligand>
        <name>NAD(+)</name>
        <dbReference type="ChEBI" id="CHEBI:57540"/>
    </ligand>
</feature>
<feature type="binding site" evidence="1">
    <location>
        <position position="190"/>
    </location>
    <ligand>
        <name>NAD(+)</name>
        <dbReference type="ChEBI" id="CHEBI:57540"/>
    </ligand>
</feature>
<feature type="binding site" evidence="1">
    <location>
        <begin position="194"/>
        <end position="197"/>
    </location>
    <ligand>
        <name>7-phospho-2-dehydro-3-deoxy-D-arabino-heptonate</name>
        <dbReference type="ChEBI" id="CHEBI:58394"/>
    </ligand>
</feature>
<feature type="binding site" evidence="1">
    <location>
        <position position="194"/>
    </location>
    <ligand>
        <name>Zn(2+)</name>
        <dbReference type="ChEBI" id="CHEBI:29105"/>
        <note>catalytic</note>
    </ligand>
</feature>
<feature type="binding site" evidence="1">
    <location>
        <position position="250"/>
    </location>
    <ligand>
        <name>7-phospho-2-dehydro-3-deoxy-D-arabino-heptonate</name>
        <dbReference type="ChEBI" id="CHEBI:58394"/>
    </ligand>
</feature>
<feature type="binding site" evidence="1">
    <location>
        <begin position="264"/>
        <end position="268"/>
    </location>
    <ligand>
        <name>7-phospho-2-dehydro-3-deoxy-D-arabino-heptonate</name>
        <dbReference type="ChEBI" id="CHEBI:58394"/>
    </ligand>
</feature>
<feature type="binding site" evidence="1">
    <location>
        <position position="271"/>
    </location>
    <ligand>
        <name>7-phospho-2-dehydro-3-deoxy-D-arabino-heptonate</name>
        <dbReference type="ChEBI" id="CHEBI:58394"/>
    </ligand>
</feature>
<feature type="binding site" evidence="1">
    <location>
        <position position="271"/>
    </location>
    <ligand>
        <name>Zn(2+)</name>
        <dbReference type="ChEBI" id="CHEBI:29105"/>
        <note>catalytic</note>
    </ligand>
</feature>
<feature type="binding site" evidence="1">
    <location>
        <position position="287"/>
    </location>
    <ligand>
        <name>7-phospho-2-dehydro-3-deoxy-D-arabino-heptonate</name>
        <dbReference type="ChEBI" id="CHEBI:58394"/>
    </ligand>
</feature>
<feature type="binding site" evidence="1">
    <location>
        <position position="287"/>
    </location>
    <ligand>
        <name>Zn(2+)</name>
        <dbReference type="ChEBI" id="CHEBI:29105"/>
        <note>catalytic</note>
    </ligand>
</feature>
<feature type="binding site" evidence="1">
    <location>
        <position position="356"/>
    </location>
    <ligand>
        <name>7-phospho-2-dehydro-3-deoxy-D-arabino-heptonate</name>
        <dbReference type="ChEBI" id="CHEBI:58394"/>
    </ligand>
</feature>
<feature type="binding site" evidence="1">
    <location>
        <begin position="874"/>
        <end position="881"/>
    </location>
    <ligand>
        <name>ATP</name>
        <dbReference type="ChEBI" id="CHEBI:30616"/>
    </ligand>
</feature>
<comment type="function">
    <text evidence="1">The AROM polypeptide catalyzes 5 consecutive enzymatic reactions in prechorismate polyaromatic amino acid biosynthesis.</text>
</comment>
<comment type="catalytic activity">
    <reaction evidence="1">
        <text>7-phospho-2-dehydro-3-deoxy-D-arabino-heptonate = 3-dehydroquinate + phosphate</text>
        <dbReference type="Rhea" id="RHEA:21968"/>
        <dbReference type="ChEBI" id="CHEBI:32364"/>
        <dbReference type="ChEBI" id="CHEBI:43474"/>
        <dbReference type="ChEBI" id="CHEBI:58394"/>
        <dbReference type="EC" id="4.2.3.4"/>
    </reaction>
</comment>
<comment type="catalytic activity">
    <reaction evidence="1">
        <text>3-dehydroquinate = 3-dehydroshikimate + H2O</text>
        <dbReference type="Rhea" id="RHEA:21096"/>
        <dbReference type="ChEBI" id="CHEBI:15377"/>
        <dbReference type="ChEBI" id="CHEBI:16630"/>
        <dbReference type="ChEBI" id="CHEBI:32364"/>
        <dbReference type="EC" id="4.2.1.10"/>
    </reaction>
</comment>
<comment type="catalytic activity">
    <reaction evidence="1">
        <text>shikimate + NADP(+) = 3-dehydroshikimate + NADPH + H(+)</text>
        <dbReference type="Rhea" id="RHEA:17737"/>
        <dbReference type="ChEBI" id="CHEBI:15378"/>
        <dbReference type="ChEBI" id="CHEBI:16630"/>
        <dbReference type="ChEBI" id="CHEBI:36208"/>
        <dbReference type="ChEBI" id="CHEBI:57783"/>
        <dbReference type="ChEBI" id="CHEBI:58349"/>
        <dbReference type="EC" id="1.1.1.25"/>
    </reaction>
</comment>
<comment type="catalytic activity">
    <reaction evidence="1">
        <text>shikimate + ATP = 3-phosphoshikimate + ADP + H(+)</text>
        <dbReference type="Rhea" id="RHEA:13121"/>
        <dbReference type="ChEBI" id="CHEBI:15378"/>
        <dbReference type="ChEBI" id="CHEBI:30616"/>
        <dbReference type="ChEBI" id="CHEBI:36208"/>
        <dbReference type="ChEBI" id="CHEBI:145989"/>
        <dbReference type="ChEBI" id="CHEBI:456216"/>
        <dbReference type="EC" id="2.7.1.71"/>
    </reaction>
</comment>
<comment type="catalytic activity">
    <reaction evidence="1">
        <text>3-phosphoshikimate + phosphoenolpyruvate = 5-O-(1-carboxyvinyl)-3-phosphoshikimate + phosphate</text>
        <dbReference type="Rhea" id="RHEA:21256"/>
        <dbReference type="ChEBI" id="CHEBI:43474"/>
        <dbReference type="ChEBI" id="CHEBI:57701"/>
        <dbReference type="ChEBI" id="CHEBI:58702"/>
        <dbReference type="ChEBI" id="CHEBI:145989"/>
        <dbReference type="EC" id="2.5.1.19"/>
    </reaction>
</comment>
<comment type="cofactor">
    <cofactor>
        <name>Zn(2+)</name>
        <dbReference type="ChEBI" id="CHEBI:29105"/>
    </cofactor>
    <text>Binds 2 Zn(2+) ions per subunit.</text>
</comment>
<comment type="pathway">
    <text evidence="1">Metabolic intermediate biosynthesis; chorismate biosynthesis; chorismate from D-erythrose 4-phosphate and phosphoenolpyruvate: step 2/7.</text>
</comment>
<comment type="pathway">
    <text evidence="1">Metabolic intermediate biosynthesis; chorismate biosynthesis; chorismate from D-erythrose 4-phosphate and phosphoenolpyruvate: step 3/7.</text>
</comment>
<comment type="pathway">
    <text evidence="1">Metabolic intermediate biosynthesis; chorismate biosynthesis; chorismate from D-erythrose 4-phosphate and phosphoenolpyruvate: step 4/7.</text>
</comment>
<comment type="pathway">
    <text evidence="1">Metabolic intermediate biosynthesis; chorismate biosynthesis; chorismate from D-erythrose 4-phosphate and phosphoenolpyruvate: step 5/7.</text>
</comment>
<comment type="pathway">
    <text evidence="1">Metabolic intermediate biosynthesis; chorismate biosynthesis; chorismate from D-erythrose 4-phosphate and phosphoenolpyruvate: step 6/7.</text>
</comment>
<comment type="subunit">
    <text evidence="1">Homodimer.</text>
</comment>
<comment type="subcellular location">
    <subcellularLocation>
        <location evidence="1">Cytoplasm</location>
    </subcellularLocation>
</comment>
<comment type="similarity">
    <text evidence="1">In the N-terminal section; belongs to the sugar phosphate cyclases superfamily. Dehydroquinate synthase family.</text>
</comment>
<comment type="similarity">
    <text evidence="1">In the 2nd section; belongs to the EPSP synthase family.</text>
</comment>
<comment type="similarity">
    <text evidence="1">In the 3rd section; belongs to the shikimate kinase family.</text>
</comment>
<comment type="similarity">
    <text evidence="1">In the 4th section; belongs to the type-I 3-dehydroquinase family.</text>
</comment>
<comment type="similarity">
    <text evidence="1">In the C-terminal section; belongs to the shikimate dehydrogenase family.</text>
</comment>
<gene>
    <name type="ORF">PADG_00875</name>
</gene>
<evidence type="ECO:0000255" key="1">
    <source>
        <dbReference type="HAMAP-Rule" id="MF_03143"/>
    </source>
</evidence>
<dbReference type="EC" id="4.2.3.4" evidence="1"/>
<dbReference type="EC" id="2.5.1.19" evidence="1"/>
<dbReference type="EC" id="2.7.1.71" evidence="1"/>
<dbReference type="EC" id="4.2.1.10" evidence="1"/>
<dbReference type="EC" id="1.1.1.25" evidence="1"/>
<dbReference type="EMBL" id="KN275957">
    <property type="protein sequence ID" value="EEH44586.2"/>
    <property type="molecule type" value="Genomic_DNA"/>
</dbReference>
<dbReference type="RefSeq" id="XP_010756018.1">
    <property type="nucleotide sequence ID" value="XM_010757716.1"/>
</dbReference>
<dbReference type="SMR" id="C1FYJ9"/>
<dbReference type="FunCoup" id="C1FYJ9">
    <property type="interactions" value="436"/>
</dbReference>
<dbReference type="STRING" id="502780.C1FYJ9"/>
<dbReference type="GeneID" id="22580644"/>
<dbReference type="KEGG" id="pbn:PADG_00875"/>
<dbReference type="VEuPathDB" id="FungiDB:PADG_00875"/>
<dbReference type="eggNOG" id="KOG0692">
    <property type="taxonomic scope" value="Eukaryota"/>
</dbReference>
<dbReference type="HOGENOM" id="CLU_001201_1_2_1"/>
<dbReference type="InParanoid" id="C1FYJ9"/>
<dbReference type="OMA" id="SWANMSW"/>
<dbReference type="OrthoDB" id="1583at33183"/>
<dbReference type="UniPathway" id="UPA00053">
    <property type="reaction ID" value="UER00085"/>
</dbReference>
<dbReference type="UniPathway" id="UPA00053">
    <property type="reaction ID" value="UER00086"/>
</dbReference>
<dbReference type="UniPathway" id="UPA00053">
    <property type="reaction ID" value="UER00087"/>
</dbReference>
<dbReference type="UniPathway" id="UPA00053">
    <property type="reaction ID" value="UER00088"/>
</dbReference>
<dbReference type="UniPathway" id="UPA00053">
    <property type="reaction ID" value="UER00089"/>
</dbReference>
<dbReference type="Proteomes" id="UP000001628">
    <property type="component" value="Unassembled WGS sequence"/>
</dbReference>
<dbReference type="GO" id="GO:0005737">
    <property type="term" value="C:cytoplasm"/>
    <property type="evidence" value="ECO:0007669"/>
    <property type="project" value="UniProtKB-SubCell"/>
</dbReference>
<dbReference type="GO" id="GO:0003855">
    <property type="term" value="F:3-dehydroquinate dehydratase activity"/>
    <property type="evidence" value="ECO:0007669"/>
    <property type="project" value="UniProtKB-UniRule"/>
</dbReference>
<dbReference type="GO" id="GO:0003856">
    <property type="term" value="F:3-dehydroquinate synthase activity"/>
    <property type="evidence" value="ECO:0007669"/>
    <property type="project" value="UniProtKB-UniRule"/>
</dbReference>
<dbReference type="GO" id="GO:0003866">
    <property type="term" value="F:3-phosphoshikimate 1-carboxyvinyltransferase activity"/>
    <property type="evidence" value="ECO:0007669"/>
    <property type="project" value="UniProtKB-UniRule"/>
</dbReference>
<dbReference type="GO" id="GO:0005524">
    <property type="term" value="F:ATP binding"/>
    <property type="evidence" value="ECO:0007669"/>
    <property type="project" value="UniProtKB-UniRule"/>
</dbReference>
<dbReference type="GO" id="GO:0046872">
    <property type="term" value="F:metal ion binding"/>
    <property type="evidence" value="ECO:0007669"/>
    <property type="project" value="UniProtKB-UniRule"/>
</dbReference>
<dbReference type="GO" id="GO:0004764">
    <property type="term" value="F:shikimate 3-dehydrogenase (NADP+) activity"/>
    <property type="evidence" value="ECO:0007669"/>
    <property type="project" value="UniProtKB-UniRule"/>
</dbReference>
<dbReference type="GO" id="GO:0004765">
    <property type="term" value="F:shikimate kinase activity"/>
    <property type="evidence" value="ECO:0007669"/>
    <property type="project" value="UniProtKB-UniRule"/>
</dbReference>
<dbReference type="GO" id="GO:0008652">
    <property type="term" value="P:amino acid biosynthetic process"/>
    <property type="evidence" value="ECO:0007669"/>
    <property type="project" value="UniProtKB-KW"/>
</dbReference>
<dbReference type="GO" id="GO:0009073">
    <property type="term" value="P:aromatic amino acid family biosynthetic process"/>
    <property type="evidence" value="ECO:0007669"/>
    <property type="project" value="UniProtKB-UniRule"/>
</dbReference>
<dbReference type="GO" id="GO:0009423">
    <property type="term" value="P:chorismate biosynthetic process"/>
    <property type="evidence" value="ECO:0007669"/>
    <property type="project" value="UniProtKB-UniRule"/>
</dbReference>
<dbReference type="CDD" id="cd00502">
    <property type="entry name" value="DHQase_I"/>
    <property type="match status" value="1"/>
</dbReference>
<dbReference type="CDD" id="cd08195">
    <property type="entry name" value="DHQS"/>
    <property type="match status" value="1"/>
</dbReference>
<dbReference type="CDD" id="cd01556">
    <property type="entry name" value="EPSP_synthase"/>
    <property type="match status" value="1"/>
</dbReference>
<dbReference type="CDD" id="cd01065">
    <property type="entry name" value="NAD_bind_Shikimate_DH"/>
    <property type="match status" value="1"/>
</dbReference>
<dbReference type="CDD" id="cd00464">
    <property type="entry name" value="SK"/>
    <property type="match status" value="1"/>
</dbReference>
<dbReference type="FunFam" id="1.20.1090.10:FF:000007">
    <property type="entry name" value="Pentafunctional AROM polypeptide"/>
    <property type="match status" value="1"/>
</dbReference>
<dbReference type="FunFam" id="3.20.20.70:FF:000135">
    <property type="entry name" value="Pentafunctional AROM polypeptide"/>
    <property type="match status" value="1"/>
</dbReference>
<dbReference type="FunFam" id="3.40.50.1970:FF:000007">
    <property type="entry name" value="Pentafunctional AROM polypeptide"/>
    <property type="match status" value="1"/>
</dbReference>
<dbReference type="FunFam" id="3.40.50.300:FF:001256">
    <property type="entry name" value="Pentafunctional AROM polypeptide"/>
    <property type="match status" value="1"/>
</dbReference>
<dbReference type="FunFam" id="3.65.10.10:FF:000007">
    <property type="entry name" value="Pentafunctional AROM polypeptide"/>
    <property type="match status" value="1"/>
</dbReference>
<dbReference type="FunFam" id="3.65.10.10:FF:000008">
    <property type="entry name" value="Pentafunctional AROM polypeptide"/>
    <property type="match status" value="1"/>
</dbReference>
<dbReference type="Gene3D" id="3.40.50.1970">
    <property type="match status" value="1"/>
</dbReference>
<dbReference type="Gene3D" id="3.20.20.70">
    <property type="entry name" value="Aldolase class I"/>
    <property type="match status" value="1"/>
</dbReference>
<dbReference type="Gene3D" id="1.20.1090.10">
    <property type="entry name" value="Dehydroquinate synthase-like - alpha domain"/>
    <property type="match status" value="1"/>
</dbReference>
<dbReference type="Gene3D" id="3.65.10.10">
    <property type="entry name" value="Enolpyruvate transferase domain"/>
    <property type="match status" value="2"/>
</dbReference>
<dbReference type="Gene3D" id="3.40.50.10860">
    <property type="entry name" value="Leucine Dehydrogenase, chain A, domain 1"/>
    <property type="match status" value="1"/>
</dbReference>
<dbReference type="Gene3D" id="3.40.50.720">
    <property type="entry name" value="NAD(P)-binding Rossmann-like Domain"/>
    <property type="match status" value="1"/>
</dbReference>
<dbReference type="Gene3D" id="3.40.50.300">
    <property type="entry name" value="P-loop containing nucleotide triphosphate hydrolases"/>
    <property type="match status" value="1"/>
</dbReference>
<dbReference type="HAMAP" id="MF_00210">
    <property type="entry name" value="EPSP_synth"/>
    <property type="match status" value="1"/>
</dbReference>
<dbReference type="HAMAP" id="MF_03143">
    <property type="entry name" value="Pentafunct_AroM"/>
    <property type="match status" value="1"/>
</dbReference>
<dbReference type="HAMAP" id="MF_00109">
    <property type="entry name" value="Shikimate_kinase"/>
    <property type="match status" value="1"/>
</dbReference>
<dbReference type="InterPro" id="IPR018508">
    <property type="entry name" value="3-dehydroquinate_DH_AS"/>
</dbReference>
<dbReference type="InterPro" id="IPR013785">
    <property type="entry name" value="Aldolase_TIM"/>
</dbReference>
<dbReference type="InterPro" id="IPR046346">
    <property type="entry name" value="Aminoacid_DH-like_N_sf"/>
</dbReference>
<dbReference type="InterPro" id="IPR016037">
    <property type="entry name" value="DHQ_synth_AroB"/>
</dbReference>
<dbReference type="InterPro" id="IPR030960">
    <property type="entry name" value="DHQS/DOIS_N"/>
</dbReference>
<dbReference type="InterPro" id="IPR056179">
    <property type="entry name" value="DHQS_C"/>
</dbReference>
<dbReference type="InterPro" id="IPR001381">
    <property type="entry name" value="DHquinase_I"/>
</dbReference>
<dbReference type="InterPro" id="IPR001986">
    <property type="entry name" value="Enolpyruvate_Tfrase_dom"/>
</dbReference>
<dbReference type="InterPro" id="IPR036968">
    <property type="entry name" value="Enolpyruvate_Tfrase_sf"/>
</dbReference>
<dbReference type="InterPro" id="IPR006264">
    <property type="entry name" value="EPSP_synthase"/>
</dbReference>
<dbReference type="InterPro" id="IPR023193">
    <property type="entry name" value="EPSP_synthase_CS"/>
</dbReference>
<dbReference type="InterPro" id="IPR036291">
    <property type="entry name" value="NAD(P)-bd_dom_sf"/>
</dbReference>
<dbReference type="InterPro" id="IPR027417">
    <property type="entry name" value="P-loop_NTPase"/>
</dbReference>
<dbReference type="InterPro" id="IPR008289">
    <property type="entry name" value="Pentafunct_AroM"/>
</dbReference>
<dbReference type="InterPro" id="IPR013792">
    <property type="entry name" value="RNA3'P_cycl/enolpyr_Trfase_a/b"/>
</dbReference>
<dbReference type="InterPro" id="IPR031322">
    <property type="entry name" value="Shikimate/glucono_kinase"/>
</dbReference>
<dbReference type="InterPro" id="IPR013708">
    <property type="entry name" value="Shikimate_DH-bd_N"/>
</dbReference>
<dbReference type="InterPro" id="IPR010110">
    <property type="entry name" value="Shikimate_DH_AroM-type"/>
</dbReference>
<dbReference type="InterPro" id="IPR000623">
    <property type="entry name" value="Shikimate_kinase/TSH1"/>
</dbReference>
<dbReference type="InterPro" id="IPR023000">
    <property type="entry name" value="Shikimate_kinase_CS"/>
</dbReference>
<dbReference type="NCBIfam" id="TIGR01356">
    <property type="entry name" value="aroA"/>
    <property type="match status" value="1"/>
</dbReference>
<dbReference type="NCBIfam" id="TIGR01357">
    <property type="entry name" value="aroB"/>
    <property type="match status" value="1"/>
</dbReference>
<dbReference type="NCBIfam" id="TIGR01093">
    <property type="entry name" value="aroD"/>
    <property type="match status" value="1"/>
</dbReference>
<dbReference type="NCBIfam" id="TIGR01809">
    <property type="entry name" value="Shik-DH-AROM"/>
    <property type="match status" value="1"/>
</dbReference>
<dbReference type="PANTHER" id="PTHR21090">
    <property type="entry name" value="AROM/DEHYDROQUINATE SYNTHASE"/>
    <property type="match status" value="1"/>
</dbReference>
<dbReference type="PANTHER" id="PTHR21090:SF5">
    <property type="entry name" value="PENTAFUNCTIONAL AROM POLYPEPTIDE"/>
    <property type="match status" value="1"/>
</dbReference>
<dbReference type="Pfam" id="PF01761">
    <property type="entry name" value="DHQ_synthase"/>
    <property type="match status" value="1"/>
</dbReference>
<dbReference type="Pfam" id="PF24621">
    <property type="entry name" value="DHQS_C"/>
    <property type="match status" value="1"/>
</dbReference>
<dbReference type="Pfam" id="PF01487">
    <property type="entry name" value="DHquinase_I"/>
    <property type="match status" value="1"/>
</dbReference>
<dbReference type="Pfam" id="PF00275">
    <property type="entry name" value="EPSP_synthase"/>
    <property type="match status" value="1"/>
</dbReference>
<dbReference type="Pfam" id="PF08501">
    <property type="entry name" value="Shikimate_dh_N"/>
    <property type="match status" value="1"/>
</dbReference>
<dbReference type="Pfam" id="PF01202">
    <property type="entry name" value="SKI"/>
    <property type="match status" value="1"/>
</dbReference>
<dbReference type="PIRSF" id="PIRSF000514">
    <property type="entry name" value="Pentafunct_AroM"/>
    <property type="match status" value="1"/>
</dbReference>
<dbReference type="PRINTS" id="PR01100">
    <property type="entry name" value="SHIKIMTKNASE"/>
</dbReference>
<dbReference type="SUPFAM" id="SSF51569">
    <property type="entry name" value="Aldolase"/>
    <property type="match status" value="1"/>
</dbReference>
<dbReference type="SUPFAM" id="SSF53223">
    <property type="entry name" value="Aminoacid dehydrogenase-like, N-terminal domain"/>
    <property type="match status" value="1"/>
</dbReference>
<dbReference type="SUPFAM" id="SSF56796">
    <property type="entry name" value="Dehydroquinate synthase-like"/>
    <property type="match status" value="1"/>
</dbReference>
<dbReference type="SUPFAM" id="SSF55205">
    <property type="entry name" value="EPT/RTPC-like"/>
    <property type="match status" value="1"/>
</dbReference>
<dbReference type="SUPFAM" id="SSF51735">
    <property type="entry name" value="NAD(P)-binding Rossmann-fold domains"/>
    <property type="match status" value="1"/>
</dbReference>
<dbReference type="SUPFAM" id="SSF52540">
    <property type="entry name" value="P-loop containing nucleoside triphosphate hydrolases"/>
    <property type="match status" value="1"/>
</dbReference>
<dbReference type="PROSITE" id="PS01028">
    <property type="entry name" value="DEHYDROQUINASE_I"/>
    <property type="match status" value="1"/>
</dbReference>
<dbReference type="PROSITE" id="PS00104">
    <property type="entry name" value="EPSP_SYNTHASE_1"/>
    <property type="match status" value="1"/>
</dbReference>
<dbReference type="PROSITE" id="PS00885">
    <property type="entry name" value="EPSP_SYNTHASE_2"/>
    <property type="match status" value="1"/>
</dbReference>
<dbReference type="PROSITE" id="PS01128">
    <property type="entry name" value="SHIKIMATE_KINASE"/>
    <property type="match status" value="1"/>
</dbReference>
<protein>
    <recommendedName>
        <fullName evidence="1">Pentafunctional AROM polypeptide</fullName>
    </recommendedName>
    <domain>
        <recommendedName>
            <fullName evidence="1">3-dehydroquinate synthase</fullName>
            <shortName evidence="1">DHQS</shortName>
            <ecNumber evidence="1">4.2.3.4</ecNumber>
        </recommendedName>
    </domain>
    <domain>
        <recommendedName>
            <fullName evidence="1">3-phosphoshikimate 1-carboxyvinyltransferase</fullName>
            <ecNumber evidence="1">2.5.1.19</ecNumber>
        </recommendedName>
        <alternativeName>
            <fullName evidence="1">5-enolpyruvylshikimate-3-phosphate synthase</fullName>
            <shortName evidence="1">EPSP synthase</shortName>
            <shortName evidence="1">EPSPS</shortName>
        </alternativeName>
    </domain>
    <domain>
        <recommendedName>
            <fullName evidence="1">Shikimate kinase</fullName>
            <shortName evidence="1">SK</shortName>
            <ecNumber evidence="1">2.7.1.71</ecNumber>
        </recommendedName>
    </domain>
    <domain>
        <recommendedName>
            <fullName evidence="1">3-dehydroquinate dehydratase</fullName>
            <shortName evidence="1">3-dehydroquinase</shortName>
            <ecNumber evidence="1">4.2.1.10</ecNumber>
        </recommendedName>
    </domain>
    <domain>
        <recommendedName>
            <fullName evidence="1">Shikimate dehydrogenase</fullName>
            <ecNumber evidence="1">1.1.1.25</ecNumber>
        </recommendedName>
    </domain>
</protein>
<organism>
    <name type="scientific">Paracoccidioides brasiliensis (strain Pb18)</name>
    <dbReference type="NCBI Taxonomy" id="502780"/>
    <lineage>
        <taxon>Eukaryota</taxon>
        <taxon>Fungi</taxon>
        <taxon>Dikarya</taxon>
        <taxon>Ascomycota</taxon>
        <taxon>Pezizomycotina</taxon>
        <taxon>Eurotiomycetes</taxon>
        <taxon>Eurotiomycetidae</taxon>
        <taxon>Onygenales</taxon>
        <taxon>Ajellomycetaceae</taxon>
        <taxon>Paracoccidioides</taxon>
    </lineage>
</organism>